<keyword id="KW-0328">Glycosyltransferase</keyword>
<keyword id="KW-0804">Transcription</keyword>
<keyword id="KW-0805">Transcription regulation</keyword>
<keyword id="KW-0808">Transferase</keyword>
<evidence type="ECO:0000255" key="1">
    <source>
        <dbReference type="HAMAP-Rule" id="MF_01219"/>
    </source>
</evidence>
<accession>B1J356</accession>
<gene>
    <name evidence="1" type="primary">pyrR</name>
    <name type="ordered locus">PputW619_0467</name>
</gene>
<comment type="function">
    <text evidence="1">Regulates the transcription of the pyrimidine nucleotide (pyr) operon in response to exogenous pyrimidines.</text>
</comment>
<comment type="function">
    <text evidence="1">Also displays a weak uracil phosphoribosyltransferase activity which is not physiologically significant.</text>
</comment>
<comment type="catalytic activity">
    <reaction evidence="1">
        <text>UMP + diphosphate = 5-phospho-alpha-D-ribose 1-diphosphate + uracil</text>
        <dbReference type="Rhea" id="RHEA:13017"/>
        <dbReference type="ChEBI" id="CHEBI:17568"/>
        <dbReference type="ChEBI" id="CHEBI:33019"/>
        <dbReference type="ChEBI" id="CHEBI:57865"/>
        <dbReference type="ChEBI" id="CHEBI:58017"/>
        <dbReference type="EC" id="2.4.2.9"/>
    </reaction>
</comment>
<comment type="similarity">
    <text evidence="1">Belongs to the purine/pyrimidine phosphoribosyltransferase family. PyrR subfamily.</text>
</comment>
<protein>
    <recommendedName>
        <fullName evidence="1">Bifunctional protein PyrR</fullName>
    </recommendedName>
    <domain>
        <recommendedName>
            <fullName evidence="1">Pyrimidine operon regulatory protein</fullName>
        </recommendedName>
    </domain>
    <domain>
        <recommendedName>
            <fullName evidence="1">Uracil phosphoribosyltransferase</fullName>
            <shortName evidence="1">UPRTase</shortName>
            <ecNumber evidence="1">2.4.2.9</ecNumber>
        </recommendedName>
    </domain>
</protein>
<reference key="1">
    <citation type="submission" date="2008-02" db="EMBL/GenBank/DDBJ databases">
        <title>Complete sequence of Pseudomonas putida W619.</title>
        <authorList>
            <person name="Copeland A."/>
            <person name="Lucas S."/>
            <person name="Lapidus A."/>
            <person name="Barry K."/>
            <person name="Detter J.C."/>
            <person name="Glavina del Rio T."/>
            <person name="Dalin E."/>
            <person name="Tice H."/>
            <person name="Pitluck S."/>
            <person name="Chain P."/>
            <person name="Malfatti S."/>
            <person name="Shin M."/>
            <person name="Vergez L."/>
            <person name="Schmutz J."/>
            <person name="Larimer F."/>
            <person name="Land M."/>
            <person name="Hauser L."/>
            <person name="Kyrpides N."/>
            <person name="Kim E."/>
            <person name="Taghavi S."/>
            <person name="Vangronsveld D."/>
            <person name="van der Lelie D."/>
            <person name="Richardson P."/>
        </authorList>
    </citation>
    <scope>NUCLEOTIDE SEQUENCE [LARGE SCALE GENOMIC DNA]</scope>
    <source>
        <strain>W619</strain>
    </source>
</reference>
<feature type="chain" id="PRO_1000139206" description="Bifunctional protein PyrR">
    <location>
        <begin position="1"/>
        <end position="172"/>
    </location>
</feature>
<feature type="short sequence motif" description="PRPP-binding" evidence="1">
    <location>
        <begin position="90"/>
        <end position="102"/>
    </location>
</feature>
<proteinExistence type="inferred from homology"/>
<dbReference type="EC" id="2.4.2.9" evidence="1"/>
<dbReference type="EMBL" id="CP000949">
    <property type="protein sequence ID" value="ACA70972.1"/>
    <property type="molecule type" value="Genomic_DNA"/>
</dbReference>
<dbReference type="SMR" id="B1J356"/>
<dbReference type="STRING" id="390235.PputW619_0467"/>
<dbReference type="KEGG" id="ppw:PputW619_0467"/>
<dbReference type="eggNOG" id="COG2065">
    <property type="taxonomic scope" value="Bacteria"/>
</dbReference>
<dbReference type="HOGENOM" id="CLU_094234_1_1_6"/>
<dbReference type="OrthoDB" id="9802227at2"/>
<dbReference type="GO" id="GO:0004845">
    <property type="term" value="F:uracil phosphoribosyltransferase activity"/>
    <property type="evidence" value="ECO:0007669"/>
    <property type="project" value="UniProtKB-UniRule"/>
</dbReference>
<dbReference type="GO" id="GO:0006355">
    <property type="term" value="P:regulation of DNA-templated transcription"/>
    <property type="evidence" value="ECO:0007669"/>
    <property type="project" value="UniProtKB-UniRule"/>
</dbReference>
<dbReference type="CDD" id="cd06223">
    <property type="entry name" value="PRTases_typeI"/>
    <property type="match status" value="1"/>
</dbReference>
<dbReference type="Gene3D" id="3.40.50.2020">
    <property type="match status" value="1"/>
</dbReference>
<dbReference type="HAMAP" id="MF_01219">
    <property type="entry name" value="PyrR"/>
    <property type="match status" value="1"/>
</dbReference>
<dbReference type="InterPro" id="IPR000836">
    <property type="entry name" value="PRibTrfase_dom"/>
</dbReference>
<dbReference type="InterPro" id="IPR029057">
    <property type="entry name" value="PRTase-like"/>
</dbReference>
<dbReference type="InterPro" id="IPR023050">
    <property type="entry name" value="PyrR"/>
</dbReference>
<dbReference type="InterPro" id="IPR050137">
    <property type="entry name" value="PyrR_bifunctional"/>
</dbReference>
<dbReference type="NCBIfam" id="NF003545">
    <property type="entry name" value="PRK05205.1-1"/>
    <property type="match status" value="1"/>
</dbReference>
<dbReference type="PANTHER" id="PTHR11608">
    <property type="entry name" value="BIFUNCTIONAL PROTEIN PYRR"/>
    <property type="match status" value="1"/>
</dbReference>
<dbReference type="PANTHER" id="PTHR11608:SF0">
    <property type="entry name" value="BIFUNCTIONAL PROTEIN PYRR"/>
    <property type="match status" value="1"/>
</dbReference>
<dbReference type="Pfam" id="PF00156">
    <property type="entry name" value="Pribosyltran"/>
    <property type="match status" value="1"/>
</dbReference>
<dbReference type="SUPFAM" id="SSF53271">
    <property type="entry name" value="PRTase-like"/>
    <property type="match status" value="1"/>
</dbReference>
<name>PYRR_PSEPW</name>
<sequence length="172" mass="18697">MSLPNPADLIRQMAVDLRAHLARRGITEPRYIGIRTGGVWVAQALQQELGDTSPLGTLDVSFYRDDFSQNGLHPQVRPSELPFEVEGQHLVLIDDVLMSGRTIRAALNELFDYGRPASVTLVCLLDLDAGELPIRPNVLGATLSLAAHERVKLTGPAPLALERQDLATASAL</sequence>
<organism>
    <name type="scientific">Pseudomonas putida (strain W619)</name>
    <dbReference type="NCBI Taxonomy" id="390235"/>
    <lineage>
        <taxon>Bacteria</taxon>
        <taxon>Pseudomonadati</taxon>
        <taxon>Pseudomonadota</taxon>
        <taxon>Gammaproteobacteria</taxon>
        <taxon>Pseudomonadales</taxon>
        <taxon>Pseudomonadaceae</taxon>
        <taxon>Pseudomonas</taxon>
    </lineage>
</organism>